<accession>P44951</accession>
<reference key="1">
    <citation type="journal article" date="1995" name="Science">
        <title>Whole-genome random sequencing and assembly of Haemophilus influenzae Rd.</title>
        <authorList>
            <person name="Fleischmann R.D."/>
            <person name="Adams M.D."/>
            <person name="White O."/>
            <person name="Clayton R.A."/>
            <person name="Kirkness E.F."/>
            <person name="Kerlavage A.R."/>
            <person name="Bult C.J."/>
            <person name="Tomb J.-F."/>
            <person name="Dougherty B.A."/>
            <person name="Merrick J.M."/>
            <person name="McKenney K."/>
            <person name="Sutton G.G."/>
            <person name="FitzHugh W."/>
            <person name="Fields C.A."/>
            <person name="Gocayne J.D."/>
            <person name="Scott J.D."/>
            <person name="Shirley R."/>
            <person name="Liu L.-I."/>
            <person name="Glodek A."/>
            <person name="Kelley J.M."/>
            <person name="Weidman J.F."/>
            <person name="Phillips C.A."/>
            <person name="Spriggs T."/>
            <person name="Hedblom E."/>
            <person name="Cotton M.D."/>
            <person name="Utterback T.R."/>
            <person name="Hanna M.C."/>
            <person name="Nguyen D.T."/>
            <person name="Saudek D.M."/>
            <person name="Brandon R.C."/>
            <person name="Fine L.D."/>
            <person name="Fritchman J.L."/>
            <person name="Fuhrmann J.L."/>
            <person name="Geoghagen N.S.M."/>
            <person name="Gnehm C.L."/>
            <person name="McDonald L.A."/>
            <person name="Small K.V."/>
            <person name="Fraser C.M."/>
            <person name="Smith H.O."/>
            <person name="Venter J.C."/>
        </authorList>
    </citation>
    <scope>NUCLEOTIDE SEQUENCE [LARGE SCALE GENOMIC DNA]</scope>
    <source>
        <strain>ATCC 51907 / DSM 11121 / KW20 / Rd</strain>
    </source>
</reference>
<reference key="2">
    <citation type="journal article" date="1998" name="Biol. Pharm. Bull.">
        <title>Two genes involved in the 1,3-diaminopropane production pathway in Haemophilus influenzae.</title>
        <authorList>
            <person name="Ikai H."/>
            <person name="Yamamoto S."/>
        </authorList>
    </citation>
    <scope>CHARACTERIZATION</scope>
</reference>
<organism>
    <name type="scientific">Haemophilus influenzae (strain ATCC 51907 / DSM 11121 / KW20 / Rd)</name>
    <dbReference type="NCBI Taxonomy" id="71421"/>
    <lineage>
        <taxon>Bacteria</taxon>
        <taxon>Pseudomonadati</taxon>
        <taxon>Pseudomonadota</taxon>
        <taxon>Gammaproteobacteria</taxon>
        <taxon>Pasteurellales</taxon>
        <taxon>Pasteurellaceae</taxon>
        <taxon>Haemophilus</taxon>
    </lineage>
</organism>
<gene>
    <name type="primary">dat</name>
    <name type="ordered locus">HI_0949</name>
</gene>
<sequence length="454" mass="49369">MTMITPVQAILASNQHFLDRQDVMESNVRSYPRKLPFAYAKAQGCWVTDVEGNEYLDFLAGAGTLALGHNHPILMQAIKDVLDSGLPLHTLDLTTPLKDAFSEELLSFFPKDKYILQFTGPSGADANEAAIKLAKTYTGRGNIIAFSGGFHGMTQGALALTGNLGAKNAVENLMPGVQFMPYPHEYRCPFGIGGEAGAKAVEQYFENFIEDVESGVVKPAAVILEAIQGEGGVVSAPISFLQKVREVTQKHGILMIVDEVQAGFCRSGRMFAFEHAGIEPDIIVMSKAVGGSLPLAVLAIRKEFDAWQPAGHTGTFRGNQLAMATGYASLKIMRDENLAQNAQERGEYLTNALRELSKEYPCIGNVRGRGLMMGIDIVDERQSKDATGAYPRDCELAAAIQKACFKNKLLLERGGRGGNVVRVLCAVNINQSECEEFIKRFKQSVVDALKVVRS</sequence>
<protein>
    <recommendedName>
        <fullName>Diaminobutyrate--2-oxoglutarate aminotransferase</fullName>
        <ecNumber>2.6.1.76</ecNumber>
    </recommendedName>
    <alternativeName>
        <fullName>Diaminobutyrate transaminase</fullName>
    </alternativeName>
    <alternativeName>
        <fullName>L-2,4-diaminobutyrate:2-ketoglutarate 4-aminotransferase</fullName>
        <shortName>DABA aminotransferase</shortName>
        <shortName>DABA-AT</shortName>
    </alternativeName>
    <alternativeName>
        <fullName>L-diaminobutyric acid transaminase</fullName>
    </alternativeName>
</protein>
<name>DAT_HAEIN</name>
<comment type="catalytic activity">
    <reaction>
        <text>L-2,4-diaminobutanoate + 2-oxoglutarate = L-aspartate 4-semialdehyde + L-glutamate</text>
        <dbReference type="Rhea" id="RHEA:11160"/>
        <dbReference type="ChEBI" id="CHEBI:16810"/>
        <dbReference type="ChEBI" id="CHEBI:29985"/>
        <dbReference type="ChEBI" id="CHEBI:58761"/>
        <dbReference type="ChEBI" id="CHEBI:537519"/>
        <dbReference type="EC" id="2.6.1.76"/>
    </reaction>
</comment>
<comment type="cofactor">
    <cofactor evidence="2">
        <name>pyridoxal 5'-phosphate</name>
        <dbReference type="ChEBI" id="CHEBI:597326"/>
    </cofactor>
</comment>
<comment type="pathway">
    <text>Amine and polyamine biosynthesis; 1,3-diaminopropane biosynthesis; 1,3-diaminopropane from L-aspartate 4-semialdehyde: step 1/2.</text>
</comment>
<comment type="similarity">
    <text evidence="2">Belongs to the class-III pyridoxal-phosphate-dependent aminotransferase family.</text>
</comment>
<proteinExistence type="evidence at protein level"/>
<evidence type="ECO:0000255" key="1"/>
<evidence type="ECO:0000305" key="2"/>
<keyword id="KW-0032">Aminotransferase</keyword>
<keyword id="KW-0663">Pyridoxal phosphate</keyword>
<keyword id="KW-1185">Reference proteome</keyword>
<keyword id="KW-0808">Transferase</keyword>
<dbReference type="EC" id="2.6.1.76"/>
<dbReference type="EMBL" id="L42023">
    <property type="protein sequence ID" value="AAC22610.1"/>
    <property type="molecule type" value="Genomic_DNA"/>
</dbReference>
<dbReference type="PIR" id="C64104">
    <property type="entry name" value="C64104"/>
</dbReference>
<dbReference type="RefSeq" id="NP_439110.1">
    <property type="nucleotide sequence ID" value="NC_000907.1"/>
</dbReference>
<dbReference type="SMR" id="P44951"/>
<dbReference type="STRING" id="71421.HI_0949"/>
<dbReference type="EnsemblBacteria" id="AAC22610">
    <property type="protein sequence ID" value="AAC22610"/>
    <property type="gene ID" value="HI_0949"/>
</dbReference>
<dbReference type="KEGG" id="hin:HI_0949"/>
<dbReference type="PATRIC" id="fig|71421.8.peg.991"/>
<dbReference type="eggNOG" id="COG0160">
    <property type="taxonomic scope" value="Bacteria"/>
</dbReference>
<dbReference type="HOGENOM" id="CLU_016922_10_0_6"/>
<dbReference type="OrthoDB" id="9801052at2"/>
<dbReference type="PhylomeDB" id="P44951"/>
<dbReference type="BioCyc" id="HINF71421:G1GJ1-990-MONOMER"/>
<dbReference type="UniPathway" id="UPA00010">
    <property type="reaction ID" value="UER00731"/>
</dbReference>
<dbReference type="Proteomes" id="UP000000579">
    <property type="component" value="Chromosome"/>
</dbReference>
<dbReference type="GO" id="GO:0045303">
    <property type="term" value="F:diaminobutyrate-2-oxoglutarate transaminase activity"/>
    <property type="evidence" value="ECO:0007669"/>
    <property type="project" value="UniProtKB-EC"/>
</dbReference>
<dbReference type="GO" id="GO:0030170">
    <property type="term" value="F:pyridoxal phosphate binding"/>
    <property type="evidence" value="ECO:0007669"/>
    <property type="project" value="InterPro"/>
</dbReference>
<dbReference type="GO" id="GO:0008483">
    <property type="term" value="F:transaminase activity"/>
    <property type="evidence" value="ECO:0000318"/>
    <property type="project" value="GO_Central"/>
</dbReference>
<dbReference type="GO" id="GO:0009058">
    <property type="term" value="P:biosynthetic process"/>
    <property type="evidence" value="ECO:0007669"/>
    <property type="project" value="InterPro"/>
</dbReference>
<dbReference type="CDD" id="cd00610">
    <property type="entry name" value="OAT_like"/>
    <property type="match status" value="1"/>
</dbReference>
<dbReference type="FunFam" id="3.40.640.10:FF:000004">
    <property type="entry name" value="Acetylornithine aminotransferase"/>
    <property type="match status" value="1"/>
</dbReference>
<dbReference type="Gene3D" id="3.90.1150.10">
    <property type="entry name" value="Aspartate Aminotransferase, domain 1"/>
    <property type="match status" value="1"/>
</dbReference>
<dbReference type="Gene3D" id="3.40.640.10">
    <property type="entry name" value="Type I PLP-dependent aspartate aminotransferase-like (Major domain)"/>
    <property type="match status" value="1"/>
</dbReference>
<dbReference type="InterPro" id="IPR005814">
    <property type="entry name" value="Aminotrans_3"/>
</dbReference>
<dbReference type="InterPro" id="IPR049704">
    <property type="entry name" value="Aminotrans_3_PPA_site"/>
</dbReference>
<dbReference type="InterPro" id="IPR004637">
    <property type="entry name" value="Dat"/>
</dbReference>
<dbReference type="InterPro" id="IPR015424">
    <property type="entry name" value="PyrdxlP-dep_Trfase"/>
</dbReference>
<dbReference type="InterPro" id="IPR015421">
    <property type="entry name" value="PyrdxlP-dep_Trfase_major"/>
</dbReference>
<dbReference type="InterPro" id="IPR015422">
    <property type="entry name" value="PyrdxlP-dep_Trfase_small"/>
</dbReference>
<dbReference type="NCBIfam" id="TIGR00709">
    <property type="entry name" value="dat"/>
    <property type="match status" value="1"/>
</dbReference>
<dbReference type="NCBIfam" id="NF005386">
    <property type="entry name" value="PRK06931.1"/>
    <property type="match status" value="1"/>
</dbReference>
<dbReference type="PANTHER" id="PTHR43552">
    <property type="entry name" value="DIAMINOBUTYRATE--2-OXOGLUTARATE AMINOTRANSFERASE"/>
    <property type="match status" value="1"/>
</dbReference>
<dbReference type="PANTHER" id="PTHR43552:SF1">
    <property type="entry name" value="DIAMINOBUTYRATE--2-OXOGLUTARATE AMINOTRANSFERASE"/>
    <property type="match status" value="1"/>
</dbReference>
<dbReference type="Pfam" id="PF00202">
    <property type="entry name" value="Aminotran_3"/>
    <property type="match status" value="1"/>
</dbReference>
<dbReference type="SUPFAM" id="SSF53383">
    <property type="entry name" value="PLP-dependent transferases"/>
    <property type="match status" value="1"/>
</dbReference>
<dbReference type="PROSITE" id="PS00600">
    <property type="entry name" value="AA_TRANSFER_CLASS_3"/>
    <property type="match status" value="1"/>
</dbReference>
<feature type="chain" id="PRO_0000120515" description="Diaminobutyrate--2-oxoglutarate aminotransferase">
    <location>
        <begin position="1"/>
        <end position="454"/>
    </location>
</feature>
<feature type="modified residue" description="N6-(pyridoxal phosphate)lysine" evidence="1">
    <location>
        <position position="287"/>
    </location>
</feature>